<feature type="chain" id="PRO_0000369631" description="Ninja-family protein mc410">
    <location>
        <begin position="1"/>
        <end position="510"/>
    </location>
</feature>
<feature type="region of interest" description="Disordered" evidence="2">
    <location>
        <begin position="1"/>
        <end position="179"/>
    </location>
</feature>
<feature type="region of interest" description="Disordered" evidence="2">
    <location>
        <begin position="323"/>
        <end position="414"/>
    </location>
</feature>
<feature type="region of interest" description="Disordered" evidence="2">
    <location>
        <begin position="481"/>
        <end position="510"/>
    </location>
</feature>
<feature type="compositionally biased region" description="Basic and acidic residues" evidence="2">
    <location>
        <begin position="31"/>
        <end position="44"/>
    </location>
</feature>
<feature type="compositionally biased region" description="Basic and acidic residues" evidence="2">
    <location>
        <begin position="103"/>
        <end position="146"/>
    </location>
</feature>
<feature type="compositionally biased region" description="Polar residues" evidence="2">
    <location>
        <begin position="148"/>
        <end position="160"/>
    </location>
</feature>
<feature type="compositionally biased region" description="Basic and acidic residues" evidence="2">
    <location>
        <begin position="363"/>
        <end position="389"/>
    </location>
</feature>
<feature type="compositionally biased region" description="Basic and acidic residues" evidence="2">
    <location>
        <begin position="397"/>
        <end position="406"/>
    </location>
</feature>
<feature type="compositionally biased region" description="Polar residues" evidence="2">
    <location>
        <begin position="485"/>
        <end position="496"/>
    </location>
</feature>
<feature type="compositionally biased region" description="Low complexity" evidence="2">
    <location>
        <begin position="497"/>
        <end position="510"/>
    </location>
</feature>
<keyword id="KW-0539">Nucleus</keyword>
<keyword id="KW-1185">Reference proteome</keyword>
<protein>
    <recommendedName>
        <fullName>Ninja-family protein mc410</fullName>
    </recommendedName>
</protein>
<name>NINJA_TOBAC</name>
<reference key="1">
    <citation type="journal article" date="2003" name="Proc. Natl. Acad. Sci. U.S.A.">
        <title>A functional genomics approach toward the understanding of secondary metabolism in plant cells.</title>
        <authorList>
            <person name="Goossens A."/>
            <person name="Haekkinen S.T."/>
            <person name="Laakso I."/>
            <person name="Seppaenen-Laakso T."/>
            <person name="Biondi S."/>
            <person name="De Sutter V."/>
            <person name="Lammertyn F."/>
            <person name="Nuutila A.M."/>
            <person name="Soederlund H."/>
            <person name="Zabeau M."/>
            <person name="Inze D."/>
            <person name="Oksman-Caldentey K.-M."/>
        </authorList>
    </citation>
    <scope>NUCLEOTIDE SEQUENCE [MRNA]</scope>
    <scope>INDUCTION</scope>
    <source>
        <strain>cv. Bright Yellow 2</strain>
    </source>
</reference>
<proteinExistence type="evidence at transcript level"/>
<organism>
    <name type="scientific">Nicotiana tabacum</name>
    <name type="common">Common tobacco</name>
    <dbReference type="NCBI Taxonomy" id="4097"/>
    <lineage>
        <taxon>Eukaryota</taxon>
        <taxon>Viridiplantae</taxon>
        <taxon>Streptophyta</taxon>
        <taxon>Embryophyta</taxon>
        <taxon>Tracheophyta</taxon>
        <taxon>Spermatophyta</taxon>
        <taxon>Magnoliopsida</taxon>
        <taxon>eudicotyledons</taxon>
        <taxon>Gunneridae</taxon>
        <taxon>Pentapetalae</taxon>
        <taxon>asterids</taxon>
        <taxon>lamiids</taxon>
        <taxon>Solanales</taxon>
        <taxon>Solanaceae</taxon>
        <taxon>Nicotianoideae</taxon>
        <taxon>Nicotianeae</taxon>
        <taxon>Nicotiana</taxon>
    </lineage>
</organism>
<comment type="subcellular location">
    <subcellularLocation>
        <location evidence="1">Nucleus</location>
    </subcellularLocation>
</comment>
<comment type="induction">
    <text evidence="3">By methyl jasmonate.</text>
</comment>
<comment type="similarity">
    <text evidence="4">Belongs to the Ninja family.</text>
</comment>
<accession>Q53HY2</accession>
<dbReference type="EMBL" id="AJ966363">
    <property type="protein sequence ID" value="CAI84658.1"/>
    <property type="molecule type" value="mRNA"/>
</dbReference>
<dbReference type="RefSeq" id="NP_001312723.1">
    <property type="nucleotide sequence ID" value="NM_001325794.1"/>
</dbReference>
<dbReference type="SMR" id="Q53HY2"/>
<dbReference type="STRING" id="4097.Q53HY2"/>
<dbReference type="PaxDb" id="4097-Q53HY2"/>
<dbReference type="GeneID" id="107806815"/>
<dbReference type="KEGG" id="nta:107806815"/>
<dbReference type="OrthoDB" id="1936656at2759"/>
<dbReference type="Proteomes" id="UP000084051">
    <property type="component" value="Unplaced"/>
</dbReference>
<dbReference type="GO" id="GO:0005634">
    <property type="term" value="C:nucleus"/>
    <property type="evidence" value="ECO:0000318"/>
    <property type="project" value="GO_Central"/>
</dbReference>
<dbReference type="GO" id="GO:0009867">
    <property type="term" value="P:jasmonic acid mediated signaling pathway"/>
    <property type="evidence" value="ECO:0000318"/>
    <property type="project" value="GO_Central"/>
</dbReference>
<dbReference type="GO" id="GO:0045892">
    <property type="term" value="P:negative regulation of DNA-templated transcription"/>
    <property type="evidence" value="ECO:0000318"/>
    <property type="project" value="GO_Central"/>
</dbReference>
<dbReference type="InterPro" id="IPR031307">
    <property type="entry name" value="Ninja_fam"/>
</dbReference>
<dbReference type="InterPro" id="IPR032308">
    <property type="entry name" value="TDBD"/>
</dbReference>
<dbReference type="PANTHER" id="PTHR31413">
    <property type="entry name" value="AFP HOMOLOG 2"/>
    <property type="match status" value="1"/>
</dbReference>
<dbReference type="PANTHER" id="PTHR31413:SF12">
    <property type="entry name" value="AFP HOMOLOG 2"/>
    <property type="match status" value="1"/>
</dbReference>
<dbReference type="Pfam" id="PF16135">
    <property type="entry name" value="TDBD"/>
    <property type="match status" value="1"/>
</dbReference>
<sequence>MDENGLDLSLGLPCGGGAASEKSKSGSSSDSKVEEVDRDGKVINDFKNFLDGGTSSQKHDSGVGSQRSDSTKHEGNLLSSINVDVDASKKLNSGGFWVQNDSRPVEVEEDRRADVGDKRKNLFRESSQQKKQEREGHHADTHDKTRTSHISITTDEGSTAENEDVADSETVGSTSRQILQHDESSKRFVGSSGLAEVHKELRSVPASSGVELIGQRRFTISSEKDVKFGNIPYTIPFQGQSINIMNLPYSMPLNSNTVSTTSTTSYPVPGVMQLMATTCVDRPPSHPVIPAYLPLMFGYSSVQLPTLDNDNLHGVASHLLQLHPSHGRGPLGSDKQKDGPNISQAAASSIPHKSSDSVQYDGRAMEHVKGNGRQHKAEETSNSRGEENVKGSNISFRAKDPPDQPRAEAVPSEFSTIRPGLAADLKFGGSGSYPNLPWVSTTGPGPNGRTISGVTYRYSSTQIRIVCACHGSHMSPDDFVRHASVEQTSQEPGTGVSSFPSSNPAASAQS</sequence>
<evidence type="ECO:0000250" key="1"/>
<evidence type="ECO:0000256" key="2">
    <source>
        <dbReference type="SAM" id="MobiDB-lite"/>
    </source>
</evidence>
<evidence type="ECO:0000269" key="3">
    <source>
    </source>
</evidence>
<evidence type="ECO:0000305" key="4"/>
<gene>
    <name type="primary">MC410</name>
</gene>